<feature type="chain" id="PRO_0000102580" description="ADP,ATP carrier protein 1">
    <location>
        <begin position="1"/>
        <end position="498"/>
    </location>
</feature>
<feature type="topological domain" description="Cytoplasmic" evidence="2">
    <location>
        <begin position="1"/>
        <end position="33"/>
    </location>
</feature>
<feature type="transmembrane region" description="Helical" evidence="2">
    <location>
        <begin position="34"/>
        <end position="54"/>
    </location>
</feature>
<feature type="topological domain" description="Extracellular" evidence="2">
    <location>
        <begin position="55"/>
        <end position="67"/>
    </location>
</feature>
<feature type="transmembrane region" description="Helical" evidence="2">
    <location>
        <begin position="68"/>
        <end position="88"/>
    </location>
</feature>
<feature type="topological domain" description="Cytoplasmic" evidence="2">
    <location>
        <begin position="89"/>
        <end position="92"/>
    </location>
</feature>
<feature type="transmembrane region" description="Helical" evidence="2">
    <location>
        <begin position="93"/>
        <end position="113"/>
    </location>
</feature>
<feature type="topological domain" description="Extracellular" evidence="2">
    <location>
        <begin position="114"/>
        <end position="147"/>
    </location>
</feature>
<feature type="transmembrane region" description="Helical" evidence="2">
    <location>
        <begin position="148"/>
        <end position="168"/>
    </location>
</feature>
<feature type="topological domain" description="Cytoplasmic" evidence="2">
    <location>
        <begin position="169"/>
        <end position="184"/>
    </location>
</feature>
<feature type="transmembrane region" description="Helical" evidence="2">
    <location>
        <begin position="185"/>
        <end position="205"/>
    </location>
</feature>
<feature type="topological domain" description="Extracellular" evidence="2">
    <location>
        <begin position="206"/>
        <end position="218"/>
    </location>
</feature>
<feature type="transmembrane region" description="Helical" evidence="2">
    <location>
        <begin position="219"/>
        <end position="239"/>
    </location>
</feature>
<feature type="topological domain" description="Cytoplasmic" evidence="2">
    <location>
        <begin position="240"/>
        <end position="279"/>
    </location>
</feature>
<feature type="transmembrane region" description="Helical" evidence="2">
    <location>
        <begin position="280"/>
        <end position="300"/>
    </location>
</feature>
<feature type="topological domain" description="Extracellular" evidence="2">
    <location>
        <begin position="301"/>
        <end position="320"/>
    </location>
</feature>
<feature type="transmembrane region" description="Helical" evidence="2">
    <location>
        <begin position="321"/>
        <end position="341"/>
    </location>
</feature>
<feature type="topological domain" description="Cytoplasmic" evidence="2">
    <location>
        <begin position="342"/>
        <end position="348"/>
    </location>
</feature>
<feature type="transmembrane region" description="Helical" evidence="2">
    <location>
        <begin position="349"/>
        <end position="369"/>
    </location>
</feature>
<feature type="topological domain" description="Extracellular" evidence="2">
    <location>
        <begin position="370"/>
        <end position="379"/>
    </location>
</feature>
<feature type="transmembrane region" description="Helical" evidence="2">
    <location>
        <begin position="380"/>
        <end position="400"/>
    </location>
</feature>
<feature type="topological domain" description="Cytoplasmic" evidence="2">
    <location>
        <begin position="401"/>
        <end position="438"/>
    </location>
</feature>
<feature type="transmembrane region" description="Helical" evidence="2">
    <location>
        <begin position="439"/>
        <end position="459"/>
    </location>
</feature>
<feature type="topological domain" description="Extracellular" evidence="2">
    <location>
        <begin position="460"/>
        <end position="465"/>
    </location>
</feature>
<feature type="transmembrane region" description="Helical" evidence="2">
    <location>
        <begin position="466"/>
        <end position="486"/>
    </location>
</feature>
<feature type="topological domain" description="Cytoplasmic" evidence="2">
    <location>
        <begin position="487"/>
        <end position="498"/>
    </location>
</feature>
<feature type="binding site" evidence="1">
    <location>
        <begin position="436"/>
        <end position="442"/>
    </location>
    <ligand>
        <name>ATP</name>
        <dbReference type="ChEBI" id="CHEBI:30616"/>
    </ligand>
</feature>
<feature type="disulfide bond" evidence="2">
    <location>
        <begin position="37"/>
        <end position="85"/>
    </location>
</feature>
<evidence type="ECO:0000255" key="1"/>
<evidence type="ECO:0000305" key="2"/>
<dbReference type="EMBL" id="M28816">
    <property type="protein sequence ID" value="AAA26382.1"/>
    <property type="molecule type" value="Genomic_DNA"/>
</dbReference>
<dbReference type="EMBL" id="AJ235270">
    <property type="protein sequence ID" value="CAA14524.1"/>
    <property type="molecule type" value="Genomic_DNA"/>
</dbReference>
<dbReference type="PIR" id="JQ0026">
    <property type="entry name" value="JQ0026"/>
</dbReference>
<dbReference type="RefSeq" id="NP_220447.1">
    <property type="nucleotide sequence ID" value="NC_000963.1"/>
</dbReference>
<dbReference type="RefSeq" id="WP_004599717.1">
    <property type="nucleotide sequence ID" value="NC_000963.1"/>
</dbReference>
<dbReference type="TCDB" id="2.A.12.1.1">
    <property type="family name" value="the atp:adp antiporter (aaa) family"/>
</dbReference>
<dbReference type="EnsemblBacteria" id="CAA14524">
    <property type="protein sequence ID" value="CAA14524"/>
    <property type="gene ID" value="CAA14524"/>
</dbReference>
<dbReference type="GeneID" id="57569181"/>
<dbReference type="KEGG" id="rpr:RP053"/>
<dbReference type="PATRIC" id="fig|272947.5.peg.54"/>
<dbReference type="eggNOG" id="COG3202">
    <property type="taxonomic scope" value="Bacteria"/>
</dbReference>
<dbReference type="HOGENOM" id="CLU_023964_0_1_5"/>
<dbReference type="OrthoDB" id="19786at2"/>
<dbReference type="Proteomes" id="UP000002480">
    <property type="component" value="Chromosome"/>
</dbReference>
<dbReference type="GO" id="GO:0005886">
    <property type="term" value="C:plasma membrane"/>
    <property type="evidence" value="ECO:0000314"/>
    <property type="project" value="CACAO"/>
</dbReference>
<dbReference type="GO" id="GO:0005524">
    <property type="term" value="F:ATP binding"/>
    <property type="evidence" value="ECO:0007669"/>
    <property type="project" value="UniProtKB-KW"/>
</dbReference>
<dbReference type="GO" id="GO:0005471">
    <property type="term" value="F:ATP:ADP antiporter activity"/>
    <property type="evidence" value="ECO:0007669"/>
    <property type="project" value="InterPro"/>
</dbReference>
<dbReference type="GO" id="GO:0015867">
    <property type="term" value="P:ATP transport"/>
    <property type="evidence" value="ECO:0000314"/>
    <property type="project" value="CACAO"/>
</dbReference>
<dbReference type="InterPro" id="IPR004667">
    <property type="entry name" value="ADP_ATP_car_bac_type"/>
</dbReference>
<dbReference type="InterPro" id="IPR036259">
    <property type="entry name" value="MFS_trans_sf"/>
</dbReference>
<dbReference type="NCBIfam" id="TIGR00769">
    <property type="entry name" value="AAA"/>
    <property type="match status" value="1"/>
</dbReference>
<dbReference type="PANTHER" id="PTHR31187">
    <property type="match status" value="1"/>
</dbReference>
<dbReference type="PANTHER" id="PTHR31187:SF1">
    <property type="entry name" value="ADP,ATP CARRIER PROTEIN 1"/>
    <property type="match status" value="1"/>
</dbReference>
<dbReference type="Pfam" id="PF03219">
    <property type="entry name" value="TLC"/>
    <property type="match status" value="1"/>
</dbReference>
<dbReference type="SUPFAM" id="SSF103473">
    <property type="entry name" value="MFS general substrate transporter"/>
    <property type="match status" value="1"/>
</dbReference>
<accession>P19568</accession>
<proteinExistence type="evidence at protein level"/>
<comment type="function">
    <text>Provides the rickettsial cell with host ATP in exchange for rickettsial ADP. This is an obligate exchange system. This energy acquiring activity is an important component of rickettsial parasitism.</text>
</comment>
<comment type="subcellular location">
    <subcellularLocation>
        <location>Cell membrane</location>
        <topology>Multi-pass membrane protein</topology>
    </subcellularLocation>
</comment>
<comment type="similarity">
    <text evidence="2">Belongs to the ADP/ATP translocase tlc family.</text>
</comment>
<protein>
    <recommendedName>
        <fullName>ADP,ATP carrier protein 1</fullName>
    </recommendedName>
    <alternativeName>
        <fullName>ADP/ATP translocase 1</fullName>
    </alternativeName>
</protein>
<gene>
    <name type="primary">tlcA</name>
    <name type="synonym">tlc</name>
    <name type="synonym">tlc1</name>
    <name type="ordered locus">RP053</name>
</gene>
<organism>
    <name type="scientific">Rickettsia prowazekii (strain Madrid E)</name>
    <dbReference type="NCBI Taxonomy" id="272947"/>
    <lineage>
        <taxon>Bacteria</taxon>
        <taxon>Pseudomonadati</taxon>
        <taxon>Pseudomonadota</taxon>
        <taxon>Alphaproteobacteria</taxon>
        <taxon>Rickettsiales</taxon>
        <taxon>Rickettsiaceae</taxon>
        <taxon>Rickettsieae</taxon>
        <taxon>Rickettsia</taxon>
        <taxon>typhus group</taxon>
    </lineage>
</organism>
<reference key="1">
    <citation type="journal article" date="1989" name="Gene">
        <title>Nucleotide sequence of the Rickettsia prowazekii ATP/ADP translocase-encoding gene.</title>
        <authorList>
            <person name="Williamson L.R."/>
            <person name="Plano G.V."/>
            <person name="Winkler H.H."/>
            <person name="Krause D.C."/>
            <person name="Wood D.O."/>
        </authorList>
    </citation>
    <scope>NUCLEOTIDE SEQUENCE [GENOMIC DNA]</scope>
    <source>
        <strain>Madrid E</strain>
    </source>
</reference>
<reference key="2">
    <citation type="journal article" date="1998" name="Nature">
        <title>The genome sequence of Rickettsia prowazekii and the origin of mitochondria.</title>
        <authorList>
            <person name="Andersson S.G.E."/>
            <person name="Zomorodipour A."/>
            <person name="Andersson J.O."/>
            <person name="Sicheritz-Ponten T."/>
            <person name="Alsmark U.C.M."/>
            <person name="Podowski R.M."/>
            <person name="Naeslund A.K."/>
            <person name="Eriksson A.-S."/>
            <person name="Winkler H.H."/>
            <person name="Kurland C.G."/>
        </authorList>
    </citation>
    <scope>NUCLEOTIDE SEQUENCE [LARGE SCALE GENOMIC DNA]</scope>
    <source>
        <strain>Madrid E</strain>
    </source>
</reference>
<reference key="3">
    <citation type="journal article" date="1991" name="J. Bacteriol.">
        <title>Identification and initial topological analysis of the Rickettsia prowazekii ATP/ADP translocase.</title>
        <authorList>
            <person name="Plano G.V."/>
            <person name="Winkler H.H."/>
        </authorList>
    </citation>
    <scope>TOPOLOGY</scope>
</reference>
<reference key="4">
    <citation type="journal article" date="1990" name="Ann. N. Y. Acad. Sci.">
        <title>Rickettsia prowazekii and ATP/ADP translocase. Analysis of gene fusions encoding beta-galactosidase-ATP/ADP translocase fusion proteins.</title>
        <authorList>
            <person name="Plano G.V."/>
            <person name="Wood D.O."/>
            <person name="Winkler H.H."/>
        </authorList>
    </citation>
    <scope>TOPOLOGY</scope>
</reference>
<reference key="5">
    <citation type="journal article" date="1999" name="J. Mol. Biol.">
        <title>Membrane topology of the Rickettsia prowazekii ATP/ADP translocase revealed by novel dual pho-lac reporters.</title>
        <authorList>
            <person name="Alexeyev M.F."/>
            <person name="Winkler H.H."/>
        </authorList>
    </citation>
    <scope>TOPOLOGY</scope>
</reference>
<sequence length="498" mass="56822">MSTSKSENYLSELRKIIWPIEQYENKKFLPLAFMMFCILLNYSTLRSIKDGFVVTDIGTESISFLKTYIVLPSAVIAMIIYVKLCDILKQENVFYVITSFFLGYFALFAFVLYPYPDLVHPDHKTIESLSLAYPNFKWFIKIVGKWSFASFYTIAELWGTMMLSLLFWQFANQITKIAEAKRFYSMFGLLANLALPVTSVVIGYFLHEKTQIVAEHLKFVPLFVIMITSSFLIILTYRWMNKNVLTDPRLYDPALVKEKKTKAKLSFIESLKMIFTSKYVGYIALLIIAYGVSVNLVEGVWKSKVKELYPTKEAYTIYMGQFQFYQGWVAIAFMLIGSNILRKVSWLTAAMITPLMMFITGAAFFSFIFFDSVIAMNLTGILASSPLTLAVMIGMIQNVLSKGVKYSLFDATKNMAYIPLDKDLRVKGQAAVEVIGGRLGKSGGAIIQSTFFILFPVFGFIEATPYFASIFFIIVILWIFAVKGLNKEYQVLVNKNEK</sequence>
<name>TLCA_RICPR</name>
<keyword id="KW-0067">ATP-binding</keyword>
<keyword id="KW-1003">Cell membrane</keyword>
<keyword id="KW-1015">Disulfide bond</keyword>
<keyword id="KW-0472">Membrane</keyword>
<keyword id="KW-0547">Nucleotide-binding</keyword>
<keyword id="KW-1185">Reference proteome</keyword>
<keyword id="KW-0812">Transmembrane</keyword>
<keyword id="KW-1133">Transmembrane helix</keyword>
<keyword id="KW-0813">Transport</keyword>